<dbReference type="EMBL" id="CP000463">
    <property type="protein sequence ID" value="ABJ07056.1"/>
    <property type="status" value="ALT_INIT"/>
    <property type="molecule type" value="Genomic_DNA"/>
</dbReference>
<dbReference type="SMR" id="Q07LX8"/>
<dbReference type="STRING" id="316055.RPE_3119"/>
<dbReference type="KEGG" id="rpe:RPE_3119"/>
<dbReference type="eggNOG" id="COG0851">
    <property type="taxonomic scope" value="Bacteria"/>
</dbReference>
<dbReference type="HOGENOM" id="CLU_137929_2_0_5"/>
<dbReference type="GO" id="GO:0051301">
    <property type="term" value="P:cell division"/>
    <property type="evidence" value="ECO:0007669"/>
    <property type="project" value="UniProtKB-KW"/>
</dbReference>
<dbReference type="GO" id="GO:0032955">
    <property type="term" value="P:regulation of division septum assembly"/>
    <property type="evidence" value="ECO:0007669"/>
    <property type="project" value="InterPro"/>
</dbReference>
<dbReference type="FunFam" id="3.30.1070.10:FF:000001">
    <property type="entry name" value="Cell division topological specificity factor"/>
    <property type="match status" value="1"/>
</dbReference>
<dbReference type="Gene3D" id="3.30.1070.10">
    <property type="entry name" value="Cell division topological specificity factor MinE"/>
    <property type="match status" value="1"/>
</dbReference>
<dbReference type="HAMAP" id="MF_00262">
    <property type="entry name" value="MinE"/>
    <property type="match status" value="1"/>
</dbReference>
<dbReference type="InterPro" id="IPR005527">
    <property type="entry name" value="MinE"/>
</dbReference>
<dbReference type="InterPro" id="IPR036707">
    <property type="entry name" value="MinE_sf"/>
</dbReference>
<dbReference type="NCBIfam" id="TIGR01215">
    <property type="entry name" value="minE"/>
    <property type="match status" value="1"/>
</dbReference>
<dbReference type="NCBIfam" id="NF001422">
    <property type="entry name" value="PRK00296.1"/>
    <property type="match status" value="1"/>
</dbReference>
<dbReference type="Pfam" id="PF03776">
    <property type="entry name" value="MinE"/>
    <property type="match status" value="1"/>
</dbReference>
<dbReference type="SUPFAM" id="SSF55229">
    <property type="entry name" value="Cell division protein MinE topological specificity domain"/>
    <property type="match status" value="1"/>
</dbReference>
<name>MINE_RHOP5</name>
<sequence>MALLRLFSGRKASAPVARERLQILLAHDRGLCGQPNLLGLLREEILAVVSRHVQLDPEKVVVRMDRGKSVSTLAVDIELPNGLA</sequence>
<comment type="function">
    <text evidence="1">Prevents the cell division inhibition by proteins MinC and MinD at internal division sites while permitting inhibition at polar sites. This ensures cell division at the proper site by restricting the formation of a division septum at the midpoint of the long axis of the cell.</text>
</comment>
<comment type="similarity">
    <text evidence="1">Belongs to the MinE family.</text>
</comment>
<comment type="sequence caution" evidence="2">
    <conflict type="erroneous initiation">
        <sequence resource="EMBL-CDS" id="ABJ07056"/>
    </conflict>
</comment>
<evidence type="ECO:0000255" key="1">
    <source>
        <dbReference type="HAMAP-Rule" id="MF_00262"/>
    </source>
</evidence>
<evidence type="ECO:0000305" key="2"/>
<proteinExistence type="inferred from homology"/>
<gene>
    <name evidence="1" type="primary">minE</name>
    <name type="ordered locus">RPE_3119</name>
</gene>
<organism>
    <name type="scientific">Rhodopseudomonas palustris (strain BisA53)</name>
    <dbReference type="NCBI Taxonomy" id="316055"/>
    <lineage>
        <taxon>Bacteria</taxon>
        <taxon>Pseudomonadati</taxon>
        <taxon>Pseudomonadota</taxon>
        <taxon>Alphaproteobacteria</taxon>
        <taxon>Hyphomicrobiales</taxon>
        <taxon>Nitrobacteraceae</taxon>
        <taxon>Rhodopseudomonas</taxon>
    </lineage>
</organism>
<protein>
    <recommendedName>
        <fullName evidence="1">Cell division topological specificity factor</fullName>
    </recommendedName>
</protein>
<accession>Q07LX8</accession>
<feature type="chain" id="PRO_0000298177" description="Cell division topological specificity factor">
    <location>
        <begin position="1"/>
        <end position="84"/>
    </location>
</feature>
<reference key="1">
    <citation type="submission" date="2006-09" db="EMBL/GenBank/DDBJ databases">
        <title>Complete sequence of Rhodopseudomonas palustris BisA53.</title>
        <authorList>
            <consortium name="US DOE Joint Genome Institute"/>
            <person name="Copeland A."/>
            <person name="Lucas S."/>
            <person name="Lapidus A."/>
            <person name="Barry K."/>
            <person name="Detter J.C."/>
            <person name="Glavina del Rio T."/>
            <person name="Hammon N."/>
            <person name="Israni S."/>
            <person name="Dalin E."/>
            <person name="Tice H."/>
            <person name="Pitluck S."/>
            <person name="Chain P."/>
            <person name="Malfatti S."/>
            <person name="Shin M."/>
            <person name="Vergez L."/>
            <person name="Schmutz J."/>
            <person name="Larimer F."/>
            <person name="Land M."/>
            <person name="Hauser L."/>
            <person name="Pelletier D.A."/>
            <person name="Kyrpides N."/>
            <person name="Kim E."/>
            <person name="Harwood C.S."/>
            <person name="Oda Y."/>
            <person name="Richardson P."/>
        </authorList>
    </citation>
    <scope>NUCLEOTIDE SEQUENCE [LARGE SCALE GENOMIC DNA]</scope>
    <source>
        <strain>BisA53</strain>
    </source>
</reference>
<keyword id="KW-0131">Cell cycle</keyword>
<keyword id="KW-0132">Cell division</keyword>